<comment type="function">
    <text evidence="2">Transcriptional activator that increases RNA Pol II processivity, thereby increasing the level of full-length viral transcripts. Recognizes a hairpin structure at the 5'-LTR of the nascent viral mRNAs referred to as the transactivation responsive RNA element (TAR) and recruits the cyclin T1-CDK9 complex (P-TEFb complex) that will in turn hyperphosphorylate the RNA polymerase II to allow efficient elongation. The CDK9 component of P-TEFb and other Tat-activated kinases hyperphosphorylate the C-terminus of RNA Pol II that becomes stabilized and much more processive.</text>
</comment>
<comment type="function">
    <text evidence="1">Extracellular circulating Tat can be endocytosed by surrounding uninfected cells via the binding to several surface receptors. Endosomal low pH allows Tat to cross the endosome membrane to enter the cytosol and eventually further translocate into the nucleus, thereby inducing severe cell dysfunctions ranging from cell activation to cell death. Through (By similarity).</text>
</comment>
<comment type="subunit">
    <text evidence="1">Interacts with host CCNT1. Associates with the P-TEFb complex composed at least of Tat, P-TEFb (CDK9 and CCNT1), TAR RNA, RNA Pol II. Interacts with CCNT2; the resulting complex is unable to bind to TAR RNA (By similarity).</text>
</comment>
<comment type="subcellular location">
    <subcellularLocation>
        <location evidence="1">Host nucleus</location>
        <location evidence="1">Host nucleolus</location>
    </subcellularLocation>
</comment>
<comment type="alternative products">
    <event type="alternative splicing"/>
    <isoform>
        <id>P20880-1</id>
        <name>Long</name>
        <sequence type="displayed"/>
    </isoform>
    <isoform>
        <id>P20880-2</id>
        <name>Short</name>
        <sequence type="described" ref="VSP_022446"/>
    </isoform>
</comment>
<comment type="domain">
    <text evidence="1">The Arg-rich RNA-binding region binds the TAR RNA. This region also mediates the nuclear localization (By similarity).</text>
</comment>
<comment type="PTM">
    <text evidence="4">The phosphorylation by CDK9 does not seem to be important for transactivation function.</text>
</comment>
<comment type="miscellaneous">
    <molecule>Isoform Short</molecule>
    <text evidence="5">Expressed in the late stage of the infection cycle, when unspliced viral RNAs are exported to the cytoplasm by the viral Rev protein.</text>
</comment>
<comment type="similarity">
    <text evidence="5">Belongs to the lentiviruses Tat family.</text>
</comment>
<organism>
    <name type="scientific">Human immunodeficiency virus type 2 subtype A (isolate ST)</name>
    <name type="common">HIV-2</name>
    <dbReference type="NCBI Taxonomy" id="11721"/>
    <lineage>
        <taxon>Viruses</taxon>
        <taxon>Riboviria</taxon>
        <taxon>Pararnavirae</taxon>
        <taxon>Artverviricota</taxon>
        <taxon>Revtraviricetes</taxon>
        <taxon>Ortervirales</taxon>
        <taxon>Retroviridae</taxon>
        <taxon>Orthoretrovirinae</taxon>
        <taxon>Lentivirus</taxon>
        <taxon>Human immunodeficiency virus 2</taxon>
    </lineage>
</organism>
<protein>
    <recommendedName>
        <fullName>Protein Tat</fullName>
    </recommendedName>
    <alternativeName>
        <fullName>Transactivating regulatory protein</fullName>
    </alternativeName>
</protein>
<accession>P20880</accession>
<sequence length="130" mass="14383">METPLKAPEGSLGSYNEPSSCTSEQDAAAQGLVSPGDEILYQLYQPLEACDNKCYCKKCCYHCQMCFLNKGLGIWYERKGRRRRTPKKTKAHSSSASDKSISTRTGNSQPEKKQKKTLETALETIGGPGR</sequence>
<dbReference type="EMBL" id="M31113">
    <property type="protein sequence ID" value="AAB01356.1"/>
    <property type="molecule type" value="Genomic_DNA"/>
</dbReference>
<dbReference type="PIR" id="F33943">
    <property type="entry name" value="TNLJST"/>
</dbReference>
<dbReference type="iPTMnet" id="P20880"/>
<dbReference type="Proteomes" id="UP000007713">
    <property type="component" value="Segment"/>
</dbReference>
<dbReference type="GO" id="GO:0044196">
    <property type="term" value="C:host cell nucleolus"/>
    <property type="evidence" value="ECO:0007669"/>
    <property type="project" value="UniProtKB-SubCell"/>
</dbReference>
<dbReference type="GO" id="GO:0003723">
    <property type="term" value="F:RNA binding"/>
    <property type="evidence" value="ECO:0007669"/>
    <property type="project" value="UniProtKB-KW"/>
</dbReference>
<dbReference type="GO" id="GO:0001070">
    <property type="term" value="F:RNA-binding transcription regulator activity"/>
    <property type="evidence" value="ECO:0007669"/>
    <property type="project" value="InterPro"/>
</dbReference>
<dbReference type="GO" id="GO:0050434">
    <property type="term" value="P:positive regulation of viral transcription"/>
    <property type="evidence" value="ECO:0007669"/>
    <property type="project" value="InterPro"/>
</dbReference>
<dbReference type="Gene3D" id="4.10.20.10">
    <property type="entry name" value="Tat domain"/>
    <property type="match status" value="1"/>
</dbReference>
<dbReference type="InterPro" id="IPR001831">
    <property type="entry name" value="IV_Tat"/>
</dbReference>
<dbReference type="InterPro" id="IPR036963">
    <property type="entry name" value="Tat_dom_sf"/>
</dbReference>
<dbReference type="Pfam" id="PF00539">
    <property type="entry name" value="Tat"/>
    <property type="match status" value="1"/>
</dbReference>
<dbReference type="PRINTS" id="PR00055">
    <property type="entry name" value="HIVTATDOMAIN"/>
</dbReference>
<keyword id="KW-0010">Activator</keyword>
<keyword id="KW-0014">AIDS</keyword>
<keyword id="KW-0025">Alternative splicing</keyword>
<keyword id="KW-1048">Host nucleus</keyword>
<keyword id="KW-0945">Host-virus interaction</keyword>
<keyword id="KW-0597">Phosphoprotein</keyword>
<keyword id="KW-0694">RNA-binding</keyword>
<keyword id="KW-0804">Transcription</keyword>
<keyword id="KW-0805">Transcription regulation</keyword>
<feature type="chain" id="PRO_0000085375" description="Protein Tat">
    <location>
        <begin position="1"/>
        <end position="130"/>
    </location>
</feature>
<feature type="region of interest" description="Disordered" evidence="3">
    <location>
        <begin position="1"/>
        <end position="29"/>
    </location>
</feature>
<feature type="region of interest" description="Cysteine-rich" evidence="1">
    <location>
        <begin position="50"/>
        <end position="66"/>
    </location>
</feature>
<feature type="region of interest" description="Core" evidence="1">
    <location>
        <begin position="67"/>
        <end position="77"/>
    </location>
</feature>
<feature type="region of interest" description="Disordered" evidence="3">
    <location>
        <begin position="78"/>
        <end position="130"/>
    </location>
</feature>
<feature type="short sequence motif" description="Nuclear localization signal, and RNA-binding (TAR)" evidence="1">
    <location>
        <begin position="78"/>
        <end position="90"/>
    </location>
</feature>
<feature type="compositionally biased region" description="Polar residues" evidence="3">
    <location>
        <begin position="13"/>
        <end position="25"/>
    </location>
</feature>
<feature type="compositionally biased region" description="Basic residues" evidence="3">
    <location>
        <begin position="79"/>
        <end position="91"/>
    </location>
</feature>
<feature type="compositionally biased region" description="Low complexity" evidence="3">
    <location>
        <begin position="92"/>
        <end position="105"/>
    </location>
</feature>
<feature type="modified residue" description="Phosphothreonine; by host CDK9" evidence="4">
    <location>
        <position position="85"/>
    </location>
</feature>
<feature type="modified residue" description="Phosphothreonine; by host CDK9" evidence="4">
    <location>
        <position position="89"/>
    </location>
</feature>
<feature type="modified residue" description="Phosphoserine; by host CDK9" evidence="4">
    <location>
        <position position="94"/>
    </location>
</feature>
<feature type="splice variant" id="VSP_022446" description="In isoform Short." evidence="5">
    <location>
        <begin position="100"/>
        <end position="130"/>
    </location>
</feature>
<feature type="mutagenesis site" description="No effect on P-TEFb binding and Tat phosphorylation; when associated with A-11." evidence="4">
    <original>T</original>
    <variation>A</variation>
    <location>
        <position position="3"/>
    </location>
</feature>
<feature type="mutagenesis site" description="No effect on P-TEFb binding and Tat phosphorylation; when associated with A-3." evidence="4">
    <original>S</original>
    <variation>A</variation>
    <location>
        <position position="11"/>
    </location>
</feature>
<feature type="mutagenesis site" description="No effect on P-TEFb binding and Tat phosphorylation; when associated with A-23." evidence="4">
    <original>T</original>
    <variation>A</variation>
    <location>
        <position position="22"/>
    </location>
</feature>
<feature type="mutagenesis site" description="No effect on P-TEFb binding and Tat phosphorylation; when associated with A-22." evidence="4">
    <original>S</original>
    <variation>A</variation>
    <location>
        <position position="23"/>
    </location>
</feature>
<feature type="mutagenesis site" description="Complete loss of P-TEFb binding and reduced Tat phosphorylation." evidence="4">
    <original>C</original>
    <variation>A</variation>
    <location>
        <position position="59"/>
    </location>
</feature>
<feature type="mutagenesis site" description="No effect on P-TEFb binding and reduced Tat phosphorylation; when associated with A-89 and A-94." evidence="4">
    <original>T</original>
    <variation>A</variation>
    <location>
        <position position="85"/>
    </location>
</feature>
<feature type="mutagenesis site" description="No effect on P-TEFb binding and reduced Tat phosphorylation; when associated with A-85 and A-94." evidence="4">
    <original>T</original>
    <variation>A</variation>
    <location>
        <position position="89"/>
    </location>
</feature>
<feature type="mutagenesis site" description="No effect on P-TEFb binding and reduced Tat phosphorylation; when associated with A-85 and A-89." evidence="4">
    <original>S</original>
    <variation>A</variation>
    <location>
        <position position="94"/>
    </location>
</feature>
<organismHost>
    <name type="scientific">Homo sapiens</name>
    <name type="common">Human</name>
    <dbReference type="NCBI Taxonomy" id="9606"/>
</organismHost>
<gene>
    <name type="primary">tat</name>
</gene>
<reference key="1">
    <citation type="journal article" date="1990" name="J. Virol.">
        <title>Molecular characterization of an attenuated human immunodeficiency virus type 2 isolate.</title>
        <authorList>
            <person name="Kumar P."/>
            <person name="Hui H."/>
            <person name="Kappes J.C."/>
            <person name="Haggarty B.S."/>
            <person name="Hoxie J.A."/>
            <person name="Arya S.K."/>
            <person name="Shaw G.M."/>
            <person name="Hahn B.H."/>
        </authorList>
    </citation>
    <scope>NUCLEOTIDE SEQUENCE [GENOMIC DNA]</scope>
</reference>
<reference key="2">
    <citation type="journal article" date="1996" name="J. Virol.">
        <title>The human immunodeficiency virus Tat proteins specifically associate with TAK in vivo and require the carboxyl-terminal domain of RNA polymerase II for function.</title>
        <authorList>
            <person name="Yang X."/>
            <person name="Herrmann C.H."/>
            <person name="Rice A.P."/>
        </authorList>
    </citation>
    <scope>PHOSPHORYLATION AT THR-85; THR-89 AND SER-94 BY HOST CDK9</scope>
    <scope>MUTAGENESIS OF THR-3; SER-11; THR-22; SER-23; CYS-59; THR-85; THR-89 AND SER-94</scope>
</reference>
<reference key="3">
    <citation type="journal article" date="2005" name="Microbes Infect.">
        <title>Decoding Tat: the biology of HIV Tat posttranslational modifications.</title>
        <authorList>
            <person name="Hetzer C."/>
            <person name="Dormeyer W."/>
            <person name="Schnolzer M."/>
            <person name="Ott M."/>
        </authorList>
    </citation>
    <scope>REVIEW</scope>
    <scope>ALTERNATIVE SPLICING</scope>
</reference>
<evidence type="ECO:0000250" key="1"/>
<evidence type="ECO:0000250" key="2">
    <source>
        <dbReference type="UniProtKB" id="P04608"/>
    </source>
</evidence>
<evidence type="ECO:0000256" key="3">
    <source>
        <dbReference type="SAM" id="MobiDB-lite"/>
    </source>
</evidence>
<evidence type="ECO:0000269" key="4">
    <source>
    </source>
</evidence>
<evidence type="ECO:0000305" key="5"/>
<proteinExistence type="evidence at protein level"/>
<name>TAT_HV2ST</name>